<name>FOLD_LARHH</name>
<organism>
    <name type="scientific">Laribacter hongkongensis (strain HLHK9)</name>
    <dbReference type="NCBI Taxonomy" id="557598"/>
    <lineage>
        <taxon>Bacteria</taxon>
        <taxon>Pseudomonadati</taxon>
        <taxon>Pseudomonadota</taxon>
        <taxon>Betaproteobacteria</taxon>
        <taxon>Neisseriales</taxon>
        <taxon>Aquaspirillaceae</taxon>
        <taxon>Laribacter</taxon>
    </lineage>
</organism>
<feature type="chain" id="PRO_1000185618" description="Bifunctional protein FolD">
    <location>
        <begin position="1"/>
        <end position="283"/>
    </location>
</feature>
<feature type="binding site" evidence="1">
    <location>
        <begin position="166"/>
        <end position="168"/>
    </location>
    <ligand>
        <name>NADP(+)</name>
        <dbReference type="ChEBI" id="CHEBI:58349"/>
    </ligand>
</feature>
<feature type="binding site" evidence="1">
    <location>
        <position position="191"/>
    </location>
    <ligand>
        <name>NADP(+)</name>
        <dbReference type="ChEBI" id="CHEBI:58349"/>
    </ligand>
</feature>
<feature type="binding site" evidence="1">
    <location>
        <position position="232"/>
    </location>
    <ligand>
        <name>NADP(+)</name>
        <dbReference type="ChEBI" id="CHEBI:58349"/>
    </ligand>
</feature>
<comment type="function">
    <text evidence="1">Catalyzes the oxidation of 5,10-methylenetetrahydrofolate to 5,10-methenyltetrahydrofolate and then the hydrolysis of 5,10-methenyltetrahydrofolate to 10-formyltetrahydrofolate.</text>
</comment>
<comment type="catalytic activity">
    <reaction evidence="1">
        <text>(6R)-5,10-methylene-5,6,7,8-tetrahydrofolate + NADP(+) = (6R)-5,10-methenyltetrahydrofolate + NADPH</text>
        <dbReference type="Rhea" id="RHEA:22812"/>
        <dbReference type="ChEBI" id="CHEBI:15636"/>
        <dbReference type="ChEBI" id="CHEBI:57455"/>
        <dbReference type="ChEBI" id="CHEBI:57783"/>
        <dbReference type="ChEBI" id="CHEBI:58349"/>
        <dbReference type="EC" id="1.5.1.5"/>
    </reaction>
</comment>
<comment type="catalytic activity">
    <reaction evidence="1">
        <text>(6R)-5,10-methenyltetrahydrofolate + H2O = (6R)-10-formyltetrahydrofolate + H(+)</text>
        <dbReference type="Rhea" id="RHEA:23700"/>
        <dbReference type="ChEBI" id="CHEBI:15377"/>
        <dbReference type="ChEBI" id="CHEBI:15378"/>
        <dbReference type="ChEBI" id="CHEBI:57455"/>
        <dbReference type="ChEBI" id="CHEBI:195366"/>
        <dbReference type="EC" id="3.5.4.9"/>
    </reaction>
</comment>
<comment type="pathway">
    <text evidence="1">One-carbon metabolism; tetrahydrofolate interconversion.</text>
</comment>
<comment type="subunit">
    <text evidence="1">Homodimer.</text>
</comment>
<comment type="similarity">
    <text evidence="1">Belongs to the tetrahydrofolate dehydrogenase/cyclohydrolase family.</text>
</comment>
<reference key="1">
    <citation type="journal article" date="2009" name="PLoS Genet.">
        <title>The complete genome and proteome of Laribacter hongkongensis reveal potential mechanisms for adaptations to different temperatures and habitats.</title>
        <authorList>
            <person name="Woo P.C.Y."/>
            <person name="Lau S.K.P."/>
            <person name="Tse H."/>
            <person name="Teng J.L.L."/>
            <person name="Curreem S.O."/>
            <person name="Tsang A.K.L."/>
            <person name="Fan R.Y.Y."/>
            <person name="Wong G.K.M."/>
            <person name="Huang Y."/>
            <person name="Loman N.J."/>
            <person name="Snyder L.A.S."/>
            <person name="Cai J.J."/>
            <person name="Huang J.-D."/>
            <person name="Mak W."/>
            <person name="Pallen M.J."/>
            <person name="Lok S."/>
            <person name="Yuen K.-Y."/>
        </authorList>
    </citation>
    <scope>NUCLEOTIDE SEQUENCE [LARGE SCALE GENOMIC DNA]</scope>
    <source>
        <strain>HLHK9</strain>
    </source>
</reference>
<dbReference type="EC" id="1.5.1.5" evidence="1"/>
<dbReference type="EC" id="3.5.4.9" evidence="1"/>
<dbReference type="EMBL" id="CP001154">
    <property type="protein sequence ID" value="ACO74010.1"/>
    <property type="molecule type" value="Genomic_DNA"/>
</dbReference>
<dbReference type="RefSeq" id="WP_012696501.1">
    <property type="nucleotide sequence ID" value="NC_012559.1"/>
</dbReference>
<dbReference type="SMR" id="C1D5X9"/>
<dbReference type="STRING" id="557598.LHK_01018"/>
<dbReference type="GeneID" id="75109194"/>
<dbReference type="KEGG" id="lhk:LHK_01018"/>
<dbReference type="eggNOG" id="COG0190">
    <property type="taxonomic scope" value="Bacteria"/>
</dbReference>
<dbReference type="HOGENOM" id="CLU_034045_2_1_4"/>
<dbReference type="UniPathway" id="UPA00193"/>
<dbReference type="Proteomes" id="UP000002010">
    <property type="component" value="Chromosome"/>
</dbReference>
<dbReference type="GO" id="GO:0005829">
    <property type="term" value="C:cytosol"/>
    <property type="evidence" value="ECO:0007669"/>
    <property type="project" value="TreeGrafter"/>
</dbReference>
<dbReference type="GO" id="GO:0004477">
    <property type="term" value="F:methenyltetrahydrofolate cyclohydrolase activity"/>
    <property type="evidence" value="ECO:0007669"/>
    <property type="project" value="UniProtKB-UniRule"/>
</dbReference>
<dbReference type="GO" id="GO:0004488">
    <property type="term" value="F:methylenetetrahydrofolate dehydrogenase (NADP+) activity"/>
    <property type="evidence" value="ECO:0007669"/>
    <property type="project" value="UniProtKB-UniRule"/>
</dbReference>
<dbReference type="GO" id="GO:0000105">
    <property type="term" value="P:L-histidine biosynthetic process"/>
    <property type="evidence" value="ECO:0007669"/>
    <property type="project" value="UniProtKB-KW"/>
</dbReference>
<dbReference type="GO" id="GO:0009086">
    <property type="term" value="P:methionine biosynthetic process"/>
    <property type="evidence" value="ECO:0007669"/>
    <property type="project" value="UniProtKB-KW"/>
</dbReference>
<dbReference type="GO" id="GO:0006164">
    <property type="term" value="P:purine nucleotide biosynthetic process"/>
    <property type="evidence" value="ECO:0007669"/>
    <property type="project" value="UniProtKB-KW"/>
</dbReference>
<dbReference type="GO" id="GO:0035999">
    <property type="term" value="P:tetrahydrofolate interconversion"/>
    <property type="evidence" value="ECO:0007669"/>
    <property type="project" value="UniProtKB-UniRule"/>
</dbReference>
<dbReference type="CDD" id="cd01080">
    <property type="entry name" value="NAD_bind_m-THF_DH_Cyclohyd"/>
    <property type="match status" value="1"/>
</dbReference>
<dbReference type="FunFam" id="3.40.50.720:FF:000094">
    <property type="entry name" value="Bifunctional protein FolD"/>
    <property type="match status" value="1"/>
</dbReference>
<dbReference type="FunFam" id="3.40.50.10860:FF:000005">
    <property type="entry name" value="C-1-tetrahydrofolate synthase, cytoplasmic, putative"/>
    <property type="match status" value="1"/>
</dbReference>
<dbReference type="Gene3D" id="3.40.50.10860">
    <property type="entry name" value="Leucine Dehydrogenase, chain A, domain 1"/>
    <property type="match status" value="1"/>
</dbReference>
<dbReference type="Gene3D" id="3.40.50.720">
    <property type="entry name" value="NAD(P)-binding Rossmann-like Domain"/>
    <property type="match status" value="1"/>
</dbReference>
<dbReference type="HAMAP" id="MF_01576">
    <property type="entry name" value="THF_DHG_CYH"/>
    <property type="match status" value="1"/>
</dbReference>
<dbReference type="InterPro" id="IPR046346">
    <property type="entry name" value="Aminoacid_DH-like_N_sf"/>
</dbReference>
<dbReference type="InterPro" id="IPR036291">
    <property type="entry name" value="NAD(P)-bd_dom_sf"/>
</dbReference>
<dbReference type="InterPro" id="IPR000672">
    <property type="entry name" value="THF_DH/CycHdrlase"/>
</dbReference>
<dbReference type="InterPro" id="IPR020630">
    <property type="entry name" value="THF_DH/CycHdrlase_cat_dom"/>
</dbReference>
<dbReference type="InterPro" id="IPR020631">
    <property type="entry name" value="THF_DH/CycHdrlase_NAD-bd_dom"/>
</dbReference>
<dbReference type="NCBIfam" id="NF008058">
    <property type="entry name" value="PRK10792.1"/>
    <property type="match status" value="1"/>
</dbReference>
<dbReference type="NCBIfam" id="NF010783">
    <property type="entry name" value="PRK14186.1"/>
    <property type="match status" value="1"/>
</dbReference>
<dbReference type="PANTHER" id="PTHR48099:SF5">
    <property type="entry name" value="C-1-TETRAHYDROFOLATE SYNTHASE, CYTOPLASMIC"/>
    <property type="match status" value="1"/>
</dbReference>
<dbReference type="PANTHER" id="PTHR48099">
    <property type="entry name" value="C-1-TETRAHYDROFOLATE SYNTHASE, CYTOPLASMIC-RELATED"/>
    <property type="match status" value="1"/>
</dbReference>
<dbReference type="Pfam" id="PF00763">
    <property type="entry name" value="THF_DHG_CYH"/>
    <property type="match status" value="1"/>
</dbReference>
<dbReference type="Pfam" id="PF02882">
    <property type="entry name" value="THF_DHG_CYH_C"/>
    <property type="match status" value="1"/>
</dbReference>
<dbReference type="PRINTS" id="PR00085">
    <property type="entry name" value="THFDHDRGNASE"/>
</dbReference>
<dbReference type="SUPFAM" id="SSF53223">
    <property type="entry name" value="Aminoacid dehydrogenase-like, N-terminal domain"/>
    <property type="match status" value="1"/>
</dbReference>
<dbReference type="SUPFAM" id="SSF51735">
    <property type="entry name" value="NAD(P)-binding Rossmann-fold domains"/>
    <property type="match status" value="1"/>
</dbReference>
<proteinExistence type="inferred from homology"/>
<evidence type="ECO:0000255" key="1">
    <source>
        <dbReference type="HAMAP-Rule" id="MF_01576"/>
    </source>
</evidence>
<accession>C1D5X9</accession>
<keyword id="KW-0028">Amino-acid biosynthesis</keyword>
<keyword id="KW-0368">Histidine biosynthesis</keyword>
<keyword id="KW-0378">Hydrolase</keyword>
<keyword id="KW-0486">Methionine biosynthesis</keyword>
<keyword id="KW-0511">Multifunctional enzyme</keyword>
<keyword id="KW-0521">NADP</keyword>
<keyword id="KW-0554">One-carbon metabolism</keyword>
<keyword id="KW-0560">Oxidoreductase</keyword>
<keyword id="KW-0658">Purine biosynthesis</keyword>
<keyword id="KW-1185">Reference proteome</keyword>
<protein>
    <recommendedName>
        <fullName evidence="1">Bifunctional protein FolD</fullName>
    </recommendedName>
    <domain>
        <recommendedName>
            <fullName evidence="1">Methylenetetrahydrofolate dehydrogenase</fullName>
            <ecNumber evidence="1">1.5.1.5</ecNumber>
        </recommendedName>
    </domain>
    <domain>
        <recommendedName>
            <fullName evidence="1">Methenyltetrahydrofolate cyclohydrolase</fullName>
            <ecNumber evidence="1">3.5.4.9</ecNumber>
        </recommendedName>
    </domain>
</protein>
<gene>
    <name evidence="1" type="primary">folD</name>
    <name type="ordered locus">LHK_01018</name>
</gene>
<sequence>MTAQLIDGKTISAALLDRVAAGVKARTEAGKRAPALAVILVGNNPASEVYVRNKKKGCEKAGIQSLAYDLPESTSEADLLALVDELNARSDVDGILVQLPLPRHINPETVIERINPKKDVDGFHPYNMGRLAVKMPLLRPCTPRGVMIMLEHAGISVEGKHAVVIGQSNIVGRPMALELLMERATVTICHSRTRDLPEEVKRADIIVAAVGIPRFVKGDWVKPGAVVIDVGINRLEDGKLCGDVDFDAAKEHASWITPVPGGVGLMTVATLLANTLDAANLHA</sequence>